<feature type="chain" id="PRO_0000128550" description="Large ribosomal subunit protein uL14">
    <location>
        <begin position="1"/>
        <end position="124"/>
    </location>
</feature>
<organism>
    <name type="scientific">Mycoplasmoides gallisepticum (strain R(low / passage 15 / clone 2))</name>
    <name type="common">Mycoplasma gallisepticum</name>
    <dbReference type="NCBI Taxonomy" id="710127"/>
    <lineage>
        <taxon>Bacteria</taxon>
        <taxon>Bacillati</taxon>
        <taxon>Mycoplasmatota</taxon>
        <taxon>Mycoplasmoidales</taxon>
        <taxon>Mycoplasmoidaceae</taxon>
        <taxon>Mycoplasmoides</taxon>
    </lineage>
</organism>
<name>RL14_MYCGA</name>
<accession>O52342</accession>
<reference key="1">
    <citation type="journal article" date="2000" name="Mol. Biol. (Mosk.)">
        <title>Determination and analysis of the nucleotide sequence of a segment of a Mycoplasma gallisepticum strain A5969 chromosome, containing operons S10 and rrn23-5.</title>
        <authorList>
            <person name="Skamrov A.V."/>
            <person name="Gol'dman M.A."/>
            <person name="Feoktistova E.S."/>
            <person name="Bibilashvili R.S."/>
        </authorList>
    </citation>
    <scope>NUCLEOTIDE SEQUENCE [GENOMIC DNA]</scope>
    <source>
        <strain>A5969Var.B</strain>
    </source>
</reference>
<reference key="2">
    <citation type="journal article" date="2003" name="Microbiology">
        <title>The complete genome sequence of the avian pathogen Mycoplasma gallisepticum strain R(low).</title>
        <authorList>
            <person name="Papazisi L."/>
            <person name="Gorton T.S."/>
            <person name="Kutish G."/>
            <person name="Markham P.F."/>
            <person name="Browning G.F."/>
            <person name="Nguyen D.K."/>
            <person name="Swartzell S."/>
            <person name="Madan A."/>
            <person name="Mahairas G."/>
            <person name="Geary S.J."/>
        </authorList>
    </citation>
    <scope>NUCLEOTIDE SEQUENCE [LARGE SCALE GENOMIC DNA]</scope>
    <source>
        <strain>R(low / passage 15 / clone 2)</strain>
    </source>
</reference>
<protein>
    <recommendedName>
        <fullName evidence="1">Large ribosomal subunit protein uL14</fullName>
    </recommendedName>
    <alternativeName>
        <fullName evidence="2">50S ribosomal protein L14</fullName>
    </alternativeName>
</protein>
<gene>
    <name evidence="1" type="primary">rplN</name>
    <name evidence="1" type="synonym">rpl14</name>
    <name type="ordered locus">MYCGA0610</name>
    <name type="ORF">MGA_0726</name>
</gene>
<sequence>MIQFMTRLNVADNTGAREVGVIKVLNGSKRRYASVGDIVVVSVKDAIPSGTVKKGQVLFAVIVRTKKGAQRRDGTHLAFDDNACVIIKNREDFAPRGTRIFGPVARELRDKGFNRIVSLASEVL</sequence>
<keyword id="KW-1185">Reference proteome</keyword>
<keyword id="KW-0687">Ribonucleoprotein</keyword>
<keyword id="KW-0689">Ribosomal protein</keyword>
<keyword id="KW-0694">RNA-binding</keyword>
<keyword id="KW-0699">rRNA-binding</keyword>
<proteinExistence type="inferred from homology"/>
<dbReference type="EMBL" id="AF036708">
    <property type="protein sequence ID" value="AAB95397.1"/>
    <property type="molecule type" value="Genomic_DNA"/>
</dbReference>
<dbReference type="EMBL" id="AE015450">
    <property type="protein sequence ID" value="AAP56411.2"/>
    <property type="molecule type" value="Genomic_DNA"/>
</dbReference>
<dbReference type="RefSeq" id="WP_011113290.1">
    <property type="nucleotide sequence ID" value="NC_004829.2"/>
</dbReference>
<dbReference type="SMR" id="O52342"/>
<dbReference type="GeneID" id="93509879"/>
<dbReference type="KEGG" id="mga:MGA_0726"/>
<dbReference type="HOGENOM" id="CLU_095071_2_1_14"/>
<dbReference type="OrthoDB" id="9806379at2"/>
<dbReference type="Proteomes" id="UP000001418">
    <property type="component" value="Chromosome"/>
</dbReference>
<dbReference type="GO" id="GO:0022625">
    <property type="term" value="C:cytosolic large ribosomal subunit"/>
    <property type="evidence" value="ECO:0007669"/>
    <property type="project" value="TreeGrafter"/>
</dbReference>
<dbReference type="GO" id="GO:0070180">
    <property type="term" value="F:large ribosomal subunit rRNA binding"/>
    <property type="evidence" value="ECO:0007669"/>
    <property type="project" value="TreeGrafter"/>
</dbReference>
<dbReference type="GO" id="GO:0003735">
    <property type="term" value="F:structural constituent of ribosome"/>
    <property type="evidence" value="ECO:0007669"/>
    <property type="project" value="InterPro"/>
</dbReference>
<dbReference type="GO" id="GO:0006412">
    <property type="term" value="P:translation"/>
    <property type="evidence" value="ECO:0007669"/>
    <property type="project" value="UniProtKB-UniRule"/>
</dbReference>
<dbReference type="CDD" id="cd00337">
    <property type="entry name" value="Ribosomal_uL14"/>
    <property type="match status" value="1"/>
</dbReference>
<dbReference type="Gene3D" id="2.40.150.20">
    <property type="entry name" value="Ribosomal protein L14"/>
    <property type="match status" value="1"/>
</dbReference>
<dbReference type="HAMAP" id="MF_01367">
    <property type="entry name" value="Ribosomal_uL14"/>
    <property type="match status" value="1"/>
</dbReference>
<dbReference type="InterPro" id="IPR000218">
    <property type="entry name" value="Ribosomal_uL14"/>
</dbReference>
<dbReference type="InterPro" id="IPR005745">
    <property type="entry name" value="Ribosomal_uL14_bac-type"/>
</dbReference>
<dbReference type="InterPro" id="IPR019972">
    <property type="entry name" value="Ribosomal_uL14_CS"/>
</dbReference>
<dbReference type="InterPro" id="IPR036853">
    <property type="entry name" value="Ribosomal_uL14_sf"/>
</dbReference>
<dbReference type="NCBIfam" id="TIGR01067">
    <property type="entry name" value="rplN_bact"/>
    <property type="match status" value="1"/>
</dbReference>
<dbReference type="PANTHER" id="PTHR11761">
    <property type="entry name" value="50S/60S RIBOSOMAL PROTEIN L14/L23"/>
    <property type="match status" value="1"/>
</dbReference>
<dbReference type="PANTHER" id="PTHR11761:SF3">
    <property type="entry name" value="LARGE RIBOSOMAL SUBUNIT PROTEIN UL14M"/>
    <property type="match status" value="1"/>
</dbReference>
<dbReference type="Pfam" id="PF00238">
    <property type="entry name" value="Ribosomal_L14"/>
    <property type="match status" value="1"/>
</dbReference>
<dbReference type="SMART" id="SM01374">
    <property type="entry name" value="Ribosomal_L14"/>
    <property type="match status" value="1"/>
</dbReference>
<dbReference type="SUPFAM" id="SSF50193">
    <property type="entry name" value="Ribosomal protein L14"/>
    <property type="match status" value="1"/>
</dbReference>
<dbReference type="PROSITE" id="PS00049">
    <property type="entry name" value="RIBOSOMAL_L14"/>
    <property type="match status" value="1"/>
</dbReference>
<comment type="function">
    <text evidence="1">Binds to 23S rRNA. Forms part of two intersubunit bridges in the 70S ribosome.</text>
</comment>
<comment type="subunit">
    <text evidence="1">Part of the 50S ribosomal subunit. Forms a cluster with proteins L3 and L19. In the 70S ribosome, L14 and L19 interact and together make contacts with the 16S rRNA in bridges B5 and B8.</text>
</comment>
<comment type="similarity">
    <text evidence="1">Belongs to the universal ribosomal protein uL14 family.</text>
</comment>
<evidence type="ECO:0000255" key="1">
    <source>
        <dbReference type="HAMAP-Rule" id="MF_01367"/>
    </source>
</evidence>
<evidence type="ECO:0000305" key="2"/>